<sequence length="81" mass="8697">MKLTCVIIVVALFLTACHAKDKQEHPAVRGSDDMQDSEDLKLAKKCTVDSDFCDPDNHDCCSGRCIDEGGSGVCAIVPVLN</sequence>
<organism>
    <name type="scientific">Conus arenatus</name>
    <name type="common">Sand-dusted cone</name>
    <dbReference type="NCBI Taxonomy" id="89451"/>
    <lineage>
        <taxon>Eukaryota</taxon>
        <taxon>Metazoa</taxon>
        <taxon>Spiralia</taxon>
        <taxon>Lophotrochozoa</taxon>
        <taxon>Mollusca</taxon>
        <taxon>Gastropoda</taxon>
        <taxon>Caenogastropoda</taxon>
        <taxon>Neogastropoda</taxon>
        <taxon>Conoidea</taxon>
        <taxon>Conidae</taxon>
        <taxon>Conus</taxon>
    </lineage>
</organism>
<protein>
    <recommendedName>
        <fullName>Conotoxin ArMKLT2-01</fullName>
    </recommendedName>
</protein>
<reference key="1">
    <citation type="journal article" date="2001" name="Mol. Biol. Evol.">
        <title>Mechanisms for evolving hypervariability: the case of conopeptides.</title>
        <authorList>
            <person name="Conticello S.G."/>
            <person name="Gilad Y."/>
            <person name="Avidan N."/>
            <person name="Ben-Asher E."/>
            <person name="Levy Z."/>
            <person name="Fainzilber M."/>
        </authorList>
    </citation>
    <scope>NUCLEOTIDE SEQUENCE [MRNA]</scope>
    <source>
        <tissue>Venom duct</tissue>
    </source>
</reference>
<evidence type="ECO:0000250" key="1"/>
<evidence type="ECO:0000255" key="2"/>
<evidence type="ECO:0000305" key="3"/>
<feature type="signal peptide" evidence="2">
    <location>
        <begin position="1"/>
        <end position="19"/>
    </location>
</feature>
<feature type="propeptide" id="PRO_0000404760" evidence="1">
    <location>
        <begin position="20"/>
        <end position="43"/>
    </location>
</feature>
<feature type="peptide" id="PRO_0000404761" description="Conotoxin ArMKLT2-01">
    <location>
        <begin position="46"/>
        <end position="81"/>
    </location>
</feature>
<feature type="disulfide bond" evidence="1">
    <location>
        <begin position="46"/>
        <end position="61"/>
    </location>
</feature>
<feature type="disulfide bond" evidence="1">
    <location>
        <begin position="53"/>
        <end position="65"/>
    </location>
</feature>
<feature type="disulfide bond" evidence="1">
    <location>
        <begin position="60"/>
        <end position="74"/>
    </location>
</feature>
<dbReference type="EMBL" id="AF215061">
    <property type="protein sequence ID" value="AAG60489.1"/>
    <property type="molecule type" value="mRNA"/>
</dbReference>
<dbReference type="SMR" id="Q9BP77"/>
<dbReference type="ConoServer" id="748">
    <property type="toxin name" value="Ar6.19 precursor"/>
</dbReference>
<dbReference type="GO" id="GO:0005576">
    <property type="term" value="C:extracellular region"/>
    <property type="evidence" value="ECO:0007669"/>
    <property type="project" value="UniProtKB-SubCell"/>
</dbReference>
<dbReference type="GO" id="GO:0008200">
    <property type="term" value="F:ion channel inhibitor activity"/>
    <property type="evidence" value="ECO:0007669"/>
    <property type="project" value="InterPro"/>
</dbReference>
<dbReference type="GO" id="GO:0090729">
    <property type="term" value="F:toxin activity"/>
    <property type="evidence" value="ECO:0007669"/>
    <property type="project" value="UniProtKB-KW"/>
</dbReference>
<dbReference type="InterPro" id="IPR004214">
    <property type="entry name" value="Conotoxin"/>
</dbReference>
<dbReference type="Pfam" id="PF02950">
    <property type="entry name" value="Conotoxin"/>
    <property type="match status" value="1"/>
</dbReference>
<keyword id="KW-0165">Cleavage on pair of basic residues</keyword>
<keyword id="KW-1015">Disulfide bond</keyword>
<keyword id="KW-0960">Knottin</keyword>
<keyword id="KW-0528">Neurotoxin</keyword>
<keyword id="KW-0964">Secreted</keyword>
<keyword id="KW-0732">Signal</keyword>
<keyword id="KW-0800">Toxin</keyword>
<name>O1619_CONAE</name>
<accession>Q9BP77</accession>
<proteinExistence type="evidence at transcript level"/>
<comment type="subcellular location">
    <subcellularLocation>
        <location evidence="1">Secreted</location>
    </subcellularLocation>
</comment>
<comment type="tissue specificity">
    <text>Expressed by the venom duct.</text>
</comment>
<comment type="domain">
    <text evidence="1">The presence of a 'disulfide through disulfide knot' structurally defines this protein as a knottin.</text>
</comment>
<comment type="domain">
    <text>The cysteine framework is VI/VII (C-C-CC-C-C).</text>
</comment>
<comment type="similarity">
    <text evidence="3">Belongs to the conotoxin O1 superfamily.</text>
</comment>